<gene>
    <name evidence="1" type="primary">rpsN</name>
    <name type="ordered locus">A1I_02100</name>
</gene>
<name>RS14_RICB8</name>
<keyword id="KW-0687">Ribonucleoprotein</keyword>
<keyword id="KW-0689">Ribosomal protein</keyword>
<keyword id="KW-0694">RNA-binding</keyword>
<keyword id="KW-0699">rRNA-binding</keyword>
<feature type="chain" id="PRO_1000128547" description="Small ribosomal subunit protein uS14">
    <location>
        <begin position="1"/>
        <end position="101"/>
    </location>
</feature>
<feature type="region of interest" description="Disordered" evidence="2">
    <location>
        <begin position="1"/>
        <end position="24"/>
    </location>
</feature>
<feature type="compositionally biased region" description="Basic residues" evidence="2">
    <location>
        <begin position="10"/>
        <end position="24"/>
    </location>
</feature>
<evidence type="ECO:0000255" key="1">
    <source>
        <dbReference type="HAMAP-Rule" id="MF_00537"/>
    </source>
</evidence>
<evidence type="ECO:0000256" key="2">
    <source>
        <dbReference type="SAM" id="MobiDB-lite"/>
    </source>
</evidence>
<evidence type="ECO:0000305" key="3"/>
<accession>A8GVC7</accession>
<comment type="function">
    <text evidence="1">Binds 16S rRNA, required for the assembly of 30S particles and may also be responsible for determining the conformation of the 16S rRNA at the A site.</text>
</comment>
<comment type="subunit">
    <text evidence="1">Part of the 30S ribosomal subunit. Contacts proteins S3 and S10.</text>
</comment>
<comment type="similarity">
    <text evidence="1">Belongs to the universal ribosomal protein uS14 family.</text>
</comment>
<organism>
    <name type="scientific">Rickettsia bellii (strain OSU 85-389)</name>
    <dbReference type="NCBI Taxonomy" id="391896"/>
    <lineage>
        <taxon>Bacteria</taxon>
        <taxon>Pseudomonadati</taxon>
        <taxon>Pseudomonadota</taxon>
        <taxon>Alphaproteobacteria</taxon>
        <taxon>Rickettsiales</taxon>
        <taxon>Rickettsiaceae</taxon>
        <taxon>Rickettsieae</taxon>
        <taxon>Rickettsia</taxon>
        <taxon>belli group</taxon>
    </lineage>
</organism>
<sequence length="101" mass="11652">MAKVSSIKKNEKRKKLSQSLHNKREKLKNKIYDKNISLEERFSLVMSLAQLSRNSSATRIRNRCELTGRPRGVIRKFGISRNKLRELSGRGLVPGIIKSSW</sequence>
<protein>
    <recommendedName>
        <fullName evidence="1">Small ribosomal subunit protein uS14</fullName>
    </recommendedName>
    <alternativeName>
        <fullName evidence="3">30S ribosomal protein S14</fullName>
    </alternativeName>
</protein>
<proteinExistence type="inferred from homology"/>
<dbReference type="EMBL" id="CP000849">
    <property type="protein sequence ID" value="ABV78804.1"/>
    <property type="molecule type" value="Genomic_DNA"/>
</dbReference>
<dbReference type="RefSeq" id="WP_011477708.1">
    <property type="nucleotide sequence ID" value="NC_009883.1"/>
</dbReference>
<dbReference type="SMR" id="A8GVC7"/>
<dbReference type="KEGG" id="rbo:A1I_02100"/>
<dbReference type="HOGENOM" id="CLU_139869_0_1_5"/>
<dbReference type="GO" id="GO:0005737">
    <property type="term" value="C:cytoplasm"/>
    <property type="evidence" value="ECO:0007669"/>
    <property type="project" value="UniProtKB-ARBA"/>
</dbReference>
<dbReference type="GO" id="GO:0015935">
    <property type="term" value="C:small ribosomal subunit"/>
    <property type="evidence" value="ECO:0007669"/>
    <property type="project" value="TreeGrafter"/>
</dbReference>
<dbReference type="GO" id="GO:0019843">
    <property type="term" value="F:rRNA binding"/>
    <property type="evidence" value="ECO:0007669"/>
    <property type="project" value="UniProtKB-UniRule"/>
</dbReference>
<dbReference type="GO" id="GO:0003735">
    <property type="term" value="F:structural constituent of ribosome"/>
    <property type="evidence" value="ECO:0007669"/>
    <property type="project" value="InterPro"/>
</dbReference>
<dbReference type="GO" id="GO:0006412">
    <property type="term" value="P:translation"/>
    <property type="evidence" value="ECO:0007669"/>
    <property type="project" value="UniProtKB-UniRule"/>
</dbReference>
<dbReference type="FunFam" id="1.10.287.1480:FF:000001">
    <property type="entry name" value="30S ribosomal protein S14"/>
    <property type="match status" value="1"/>
</dbReference>
<dbReference type="Gene3D" id="1.10.287.1480">
    <property type="match status" value="1"/>
</dbReference>
<dbReference type="HAMAP" id="MF_00537">
    <property type="entry name" value="Ribosomal_uS14_1"/>
    <property type="match status" value="1"/>
</dbReference>
<dbReference type="InterPro" id="IPR001209">
    <property type="entry name" value="Ribosomal_uS14"/>
</dbReference>
<dbReference type="InterPro" id="IPR023036">
    <property type="entry name" value="Ribosomal_uS14_bac/plastid"/>
</dbReference>
<dbReference type="InterPro" id="IPR018271">
    <property type="entry name" value="Ribosomal_uS14_CS"/>
</dbReference>
<dbReference type="NCBIfam" id="NF006477">
    <property type="entry name" value="PRK08881.1"/>
    <property type="match status" value="1"/>
</dbReference>
<dbReference type="PANTHER" id="PTHR19836">
    <property type="entry name" value="30S RIBOSOMAL PROTEIN S14"/>
    <property type="match status" value="1"/>
</dbReference>
<dbReference type="PANTHER" id="PTHR19836:SF19">
    <property type="entry name" value="SMALL RIBOSOMAL SUBUNIT PROTEIN US14M"/>
    <property type="match status" value="1"/>
</dbReference>
<dbReference type="Pfam" id="PF00253">
    <property type="entry name" value="Ribosomal_S14"/>
    <property type="match status" value="1"/>
</dbReference>
<dbReference type="SUPFAM" id="SSF57716">
    <property type="entry name" value="Glucocorticoid receptor-like (DNA-binding domain)"/>
    <property type="match status" value="1"/>
</dbReference>
<dbReference type="PROSITE" id="PS00527">
    <property type="entry name" value="RIBOSOMAL_S14"/>
    <property type="match status" value="1"/>
</dbReference>
<reference key="1">
    <citation type="submission" date="2007-09" db="EMBL/GenBank/DDBJ databases">
        <title>Complete genome sequencing of Rickettsia bellii.</title>
        <authorList>
            <person name="Madan A."/>
            <person name="Lee H."/>
            <person name="Madan A."/>
            <person name="Yoon J.-G."/>
            <person name="Ryu G.-Y."/>
            <person name="Dasch G."/>
            <person name="Ereemeva M."/>
        </authorList>
    </citation>
    <scope>NUCLEOTIDE SEQUENCE [LARGE SCALE GENOMIC DNA]</scope>
    <source>
        <strain>OSU 85-389</strain>
    </source>
</reference>